<reference key="1">
    <citation type="journal article" date="2002" name="Nature">
        <title>The genome sequence of Schizosaccharomyces pombe.</title>
        <authorList>
            <person name="Wood V."/>
            <person name="Gwilliam R."/>
            <person name="Rajandream M.A."/>
            <person name="Lyne M.H."/>
            <person name="Lyne R."/>
            <person name="Stewart A."/>
            <person name="Sgouros J.G."/>
            <person name="Peat N."/>
            <person name="Hayles J."/>
            <person name="Baker S.G."/>
            <person name="Basham D."/>
            <person name="Bowman S."/>
            <person name="Brooks K."/>
            <person name="Brown D."/>
            <person name="Brown S."/>
            <person name="Chillingworth T."/>
            <person name="Churcher C.M."/>
            <person name="Collins M."/>
            <person name="Connor R."/>
            <person name="Cronin A."/>
            <person name="Davis P."/>
            <person name="Feltwell T."/>
            <person name="Fraser A."/>
            <person name="Gentles S."/>
            <person name="Goble A."/>
            <person name="Hamlin N."/>
            <person name="Harris D.E."/>
            <person name="Hidalgo J."/>
            <person name="Hodgson G."/>
            <person name="Holroyd S."/>
            <person name="Hornsby T."/>
            <person name="Howarth S."/>
            <person name="Huckle E.J."/>
            <person name="Hunt S."/>
            <person name="Jagels K."/>
            <person name="James K.D."/>
            <person name="Jones L."/>
            <person name="Jones M."/>
            <person name="Leather S."/>
            <person name="McDonald S."/>
            <person name="McLean J."/>
            <person name="Mooney P."/>
            <person name="Moule S."/>
            <person name="Mungall K.L."/>
            <person name="Murphy L.D."/>
            <person name="Niblett D."/>
            <person name="Odell C."/>
            <person name="Oliver K."/>
            <person name="O'Neil S."/>
            <person name="Pearson D."/>
            <person name="Quail M.A."/>
            <person name="Rabbinowitsch E."/>
            <person name="Rutherford K.M."/>
            <person name="Rutter S."/>
            <person name="Saunders D."/>
            <person name="Seeger K."/>
            <person name="Sharp S."/>
            <person name="Skelton J."/>
            <person name="Simmonds M.N."/>
            <person name="Squares R."/>
            <person name="Squares S."/>
            <person name="Stevens K."/>
            <person name="Taylor K."/>
            <person name="Taylor R.G."/>
            <person name="Tivey A."/>
            <person name="Walsh S.V."/>
            <person name="Warren T."/>
            <person name="Whitehead S."/>
            <person name="Woodward J.R."/>
            <person name="Volckaert G."/>
            <person name="Aert R."/>
            <person name="Robben J."/>
            <person name="Grymonprez B."/>
            <person name="Weltjens I."/>
            <person name="Vanstreels E."/>
            <person name="Rieger M."/>
            <person name="Schaefer M."/>
            <person name="Mueller-Auer S."/>
            <person name="Gabel C."/>
            <person name="Fuchs M."/>
            <person name="Duesterhoeft A."/>
            <person name="Fritzc C."/>
            <person name="Holzer E."/>
            <person name="Moestl D."/>
            <person name="Hilbert H."/>
            <person name="Borzym K."/>
            <person name="Langer I."/>
            <person name="Beck A."/>
            <person name="Lehrach H."/>
            <person name="Reinhardt R."/>
            <person name="Pohl T.M."/>
            <person name="Eger P."/>
            <person name="Zimmermann W."/>
            <person name="Wedler H."/>
            <person name="Wambutt R."/>
            <person name="Purnelle B."/>
            <person name="Goffeau A."/>
            <person name="Cadieu E."/>
            <person name="Dreano S."/>
            <person name="Gloux S."/>
            <person name="Lelaure V."/>
            <person name="Mottier S."/>
            <person name="Galibert F."/>
            <person name="Aves S.J."/>
            <person name="Xiang Z."/>
            <person name="Hunt C."/>
            <person name="Moore K."/>
            <person name="Hurst S.M."/>
            <person name="Lucas M."/>
            <person name="Rochet M."/>
            <person name="Gaillardin C."/>
            <person name="Tallada V.A."/>
            <person name="Garzon A."/>
            <person name="Thode G."/>
            <person name="Daga R.R."/>
            <person name="Cruzado L."/>
            <person name="Jimenez J."/>
            <person name="Sanchez M."/>
            <person name="del Rey F."/>
            <person name="Benito J."/>
            <person name="Dominguez A."/>
            <person name="Revuelta J.L."/>
            <person name="Moreno S."/>
            <person name="Armstrong J."/>
            <person name="Forsburg S.L."/>
            <person name="Cerutti L."/>
            <person name="Lowe T."/>
            <person name="McCombie W.R."/>
            <person name="Paulsen I."/>
            <person name="Potashkin J."/>
            <person name="Shpakovski G.V."/>
            <person name="Ussery D."/>
            <person name="Barrell B.G."/>
            <person name="Nurse P."/>
        </authorList>
    </citation>
    <scope>NUCLEOTIDE SEQUENCE [LARGE SCALE GENOMIC DNA]</scope>
    <source>
        <strain>972 / ATCC 24843</strain>
    </source>
</reference>
<reference key="2">
    <citation type="submission" date="1997-04" db="EMBL/GenBank/DDBJ databases">
        <authorList>
            <person name="Jang Y.-J."/>
            <person name="Yoo H.-S."/>
        </authorList>
    </citation>
    <scope>NUCLEOTIDE SEQUENCE [MRNA] OF 142-216</scope>
    <source>
        <strain>972 / ATCC 24843</strain>
    </source>
</reference>
<reference key="3">
    <citation type="journal article" date="2004" name="Mol. Cell. Proteomics">
        <title>A comparative analysis of an orthologous proteomic environment in the yeasts Saccharomyces cerevisiae and Schizosaccharomyces pombe.</title>
        <authorList>
            <person name="Roguev A."/>
            <person name="Shevchenko A."/>
            <person name="Schaft D."/>
            <person name="Thomas H."/>
            <person name="Stewart A.F."/>
            <person name="Shevchenko A."/>
        </authorList>
    </citation>
    <scope>IDENTIFICATION IN THE CPF COMPLEX</scope>
    <scope>IDENTIFICATION BY MASS SPECTROMETRY</scope>
</reference>
<reference key="4">
    <citation type="journal article" date="2006" name="Nat. Biotechnol.">
        <title>ORFeome cloning and global analysis of protein localization in the fission yeast Schizosaccharomyces pombe.</title>
        <authorList>
            <person name="Matsuyama A."/>
            <person name="Arai R."/>
            <person name="Yashiroda Y."/>
            <person name="Shirai A."/>
            <person name="Kamata A."/>
            <person name="Sekido S."/>
            <person name="Kobayashi Y."/>
            <person name="Hashimoto A."/>
            <person name="Hamamoto M."/>
            <person name="Hiraoka Y."/>
            <person name="Horinouchi S."/>
            <person name="Yoshida M."/>
        </authorList>
    </citation>
    <scope>SUBCELLULAR LOCATION [LARGE SCALE ANALYSIS]</scope>
</reference>
<organism>
    <name type="scientific">Schizosaccharomyces pombe (strain 972 / ATCC 24843)</name>
    <name type="common">Fission yeast</name>
    <dbReference type="NCBI Taxonomy" id="284812"/>
    <lineage>
        <taxon>Eukaryota</taxon>
        <taxon>Fungi</taxon>
        <taxon>Dikarya</taxon>
        <taxon>Ascomycota</taxon>
        <taxon>Taphrinomycotina</taxon>
        <taxon>Schizosaccharomycetes</taxon>
        <taxon>Schizosaccharomycetales</taxon>
        <taxon>Schizosaccharomycetaceae</taxon>
        <taxon>Schizosaccharomyces</taxon>
    </lineage>
</organism>
<evidence type="ECO:0000256" key="1">
    <source>
        <dbReference type="SAM" id="MobiDB-lite"/>
    </source>
</evidence>
<evidence type="ECO:0000269" key="2">
    <source>
    </source>
</evidence>
<evidence type="ECO:0000269" key="3">
    <source>
    </source>
</evidence>
<accession>O74535</accession>
<accession>O14392</accession>
<dbReference type="EMBL" id="CU329672">
    <property type="protein sequence ID" value="CAA20832.1"/>
    <property type="molecule type" value="Genomic_DNA"/>
</dbReference>
<dbReference type="EMBL" id="U97391">
    <property type="protein sequence ID" value="AAB63883.1"/>
    <property type="molecule type" value="mRNA"/>
</dbReference>
<dbReference type="PIR" id="T41586">
    <property type="entry name" value="T41586"/>
</dbReference>
<dbReference type="SMR" id="O74535"/>
<dbReference type="BioGRID" id="275979">
    <property type="interactions" value="26"/>
</dbReference>
<dbReference type="IntAct" id="O74535">
    <property type="interactions" value="2"/>
</dbReference>
<dbReference type="MINT" id="O74535"/>
<dbReference type="STRING" id="284812.O74535"/>
<dbReference type="iPTMnet" id="O74535"/>
<dbReference type="PaxDb" id="4896-SPCC74.02c.1"/>
<dbReference type="EnsemblFungi" id="SPCC74.02c.1">
    <property type="protein sequence ID" value="SPCC74.02c.1:pep"/>
    <property type="gene ID" value="SPCC74.02c"/>
</dbReference>
<dbReference type="KEGG" id="spo:2539414"/>
<dbReference type="PomBase" id="SPCC74.02c"/>
<dbReference type="VEuPathDB" id="FungiDB:SPCC74.02c"/>
<dbReference type="eggNOG" id="ENOG502S92D">
    <property type="taxonomic scope" value="Eukaryota"/>
</dbReference>
<dbReference type="HOGENOM" id="CLU_388904_0_0_1"/>
<dbReference type="InParanoid" id="O74535"/>
<dbReference type="OMA" id="KTPHIYG"/>
<dbReference type="PRO" id="PR:O74535"/>
<dbReference type="Proteomes" id="UP000002485">
    <property type="component" value="Chromosome III"/>
</dbReference>
<dbReference type="GO" id="GO:0005829">
    <property type="term" value="C:cytosol"/>
    <property type="evidence" value="ECO:0007005"/>
    <property type="project" value="PomBase"/>
</dbReference>
<dbReference type="GO" id="GO:1990567">
    <property type="term" value="C:DPS complex"/>
    <property type="evidence" value="ECO:0000314"/>
    <property type="project" value="PomBase"/>
</dbReference>
<dbReference type="GO" id="GO:0005847">
    <property type="term" value="C:mRNA cleavage and polyadenylation specificity factor complex"/>
    <property type="evidence" value="ECO:0000314"/>
    <property type="project" value="PomBase"/>
</dbReference>
<dbReference type="GO" id="GO:0005634">
    <property type="term" value="C:nucleus"/>
    <property type="evidence" value="ECO:0007005"/>
    <property type="project" value="PomBase"/>
</dbReference>
<dbReference type="GO" id="GO:0003723">
    <property type="term" value="F:RNA binding"/>
    <property type="evidence" value="ECO:0007669"/>
    <property type="project" value="UniProtKB-KW"/>
</dbReference>
<dbReference type="GO" id="GO:0180010">
    <property type="term" value="P:co-transcriptional mRNA 3'-end processing, cleavage and polyadenylation pathway"/>
    <property type="evidence" value="ECO:0000305"/>
    <property type="project" value="PomBase"/>
</dbReference>
<feature type="chain" id="PRO_0000351430" description="Cleavage and polyadenylation factor complex subunit C74.02c">
    <location>
        <begin position="1"/>
        <end position="710"/>
    </location>
</feature>
<feature type="region of interest" description="Disordered" evidence="1">
    <location>
        <begin position="1"/>
        <end position="42"/>
    </location>
</feature>
<feature type="region of interest" description="Disordered" evidence="1">
    <location>
        <begin position="85"/>
        <end position="170"/>
    </location>
</feature>
<feature type="region of interest" description="Disordered" evidence="1">
    <location>
        <begin position="361"/>
        <end position="510"/>
    </location>
</feature>
<feature type="compositionally biased region" description="Polar residues" evidence="1">
    <location>
        <begin position="1"/>
        <end position="30"/>
    </location>
</feature>
<feature type="compositionally biased region" description="Low complexity" evidence="1">
    <location>
        <begin position="86"/>
        <end position="108"/>
    </location>
</feature>
<feature type="compositionally biased region" description="Polar residues" evidence="1">
    <location>
        <begin position="109"/>
        <end position="170"/>
    </location>
</feature>
<feature type="compositionally biased region" description="Low complexity" evidence="1">
    <location>
        <begin position="361"/>
        <end position="383"/>
    </location>
</feature>
<feature type="compositionally biased region" description="Low complexity" evidence="1">
    <location>
        <begin position="401"/>
        <end position="420"/>
    </location>
</feature>
<feature type="compositionally biased region" description="Polar residues" evidence="1">
    <location>
        <begin position="421"/>
        <end position="430"/>
    </location>
</feature>
<feature type="compositionally biased region" description="Basic and acidic residues" evidence="1">
    <location>
        <begin position="437"/>
        <end position="447"/>
    </location>
</feature>
<gene>
    <name type="ORF">SPCC74.02c</name>
</gene>
<proteinExistence type="evidence at protein level"/>
<keyword id="KW-0963">Cytoplasm</keyword>
<keyword id="KW-0507">mRNA processing</keyword>
<keyword id="KW-0539">Nucleus</keyword>
<keyword id="KW-1185">Reference proteome</keyword>
<keyword id="KW-0694">RNA-binding</keyword>
<protein>
    <recommendedName>
        <fullName>Cleavage and polyadenylation factor complex subunit C74.02c</fullName>
    </recommendedName>
</protein>
<comment type="function">
    <text>RNA-binding component of the cleavage and polyadenylation factor (CPF) complex, which plays a key role in polyadenylation-dependent pre-mRNA 3'-end formation. Involved in poly(A) site recognition. May be involved in coupling transcription termination and mRNA 3'-end formation.</text>
</comment>
<comment type="subunit">
    <text evidence="2">Component of the cleavage and polyadenylation factor (CPF) complex.</text>
</comment>
<comment type="subcellular location">
    <subcellularLocation>
        <location evidence="3">Cytoplasm</location>
    </subcellularLocation>
    <subcellularLocation>
        <location evidence="3">Nucleus</location>
    </subcellularLocation>
</comment>
<sequence>MDNWNSVRNVSSDRQTSKTSENPPHTSNEYSGKPEFINLSPDLEENLDEKLMSAFPGLEPHVFQHSQSPLSHKDASLLATMPSVASSNPSLISSGSSQTGSPSQSLSSNKEPSSPGISPSNDSQSQNTNHTSISANPYVNNPSHTSRNPDSGSSLNTASHEVPSSKSDVNVQMLARLKSKSRQKISSSDPLEDLRLTLTECLNPINIVQAPKECAAILVNLMSNITQDDQKLVFLDLLKSKVGNSIYSQLVDGGRKLFLPKLRNWFVSAIRSKHDELIHLILLVLANLPLTTEKLAEVKFGKPILIVKKKSTNSVIRQLAENLSELAEKSFTIEQNRENEKSSTKNDSTVSSSAVVMAPAGPAMAPSASNKPSASSTTKSSNSKSKKKVTSISGTSFFKNLASSTKPTSASSSTKAPLTKQQTNPSTPLSSIMAGLKGREKEKDKDSGISSENVSNNREELPSFRKRSSSSRQSEEIASLQAENAVFSSDPASNDEKTGNKKRKKKSVSWKPDNDLVQVKFIESLNEEGAASVKTPHIYGNARDMDRQEARVAFGSHVEDDVENEIIWYKPVPIKFEISKDEIHPRGYKCGGNERNLTPEATSEIEREKNESKDISTFNIILDLPVIREFDDSRPPAHIKLVSSDTQATTELGFNGLVQQVSENNTNAYSATSNSQLSSIFSNLSSSISDASSNVLQNPSLSIPNYSNAI</sequence>
<name>CPSFX_SCHPO</name>